<comment type="similarity">
    <text evidence="2">Belongs to the UPF0337 (CsbD) family.</text>
</comment>
<reference key="1">
    <citation type="journal article" date="2001" name="Genome Res.">
        <title>The complete genome sequence of the lactic acid bacterium Lactococcus lactis ssp. lactis IL1403.</title>
        <authorList>
            <person name="Bolotin A."/>
            <person name="Wincker P."/>
            <person name="Mauger S."/>
            <person name="Jaillon O."/>
            <person name="Malarme K."/>
            <person name="Weissenbach J."/>
            <person name="Ehrlich S.D."/>
            <person name="Sorokin A."/>
        </authorList>
    </citation>
    <scope>NUCLEOTIDE SEQUENCE [LARGE SCALE GENOMIC DNA]</scope>
    <source>
        <strain>IL1403</strain>
    </source>
</reference>
<protein>
    <recommendedName>
        <fullName>UPF0337 protein YhjA</fullName>
    </recommendedName>
</protein>
<organism>
    <name type="scientific">Lactococcus lactis subsp. lactis (strain IL1403)</name>
    <name type="common">Streptococcus lactis</name>
    <dbReference type="NCBI Taxonomy" id="272623"/>
    <lineage>
        <taxon>Bacteria</taxon>
        <taxon>Bacillati</taxon>
        <taxon>Bacillota</taxon>
        <taxon>Bacilli</taxon>
        <taxon>Lactobacillales</taxon>
        <taxon>Streptococcaceae</taxon>
        <taxon>Lactococcus</taxon>
    </lineage>
</organism>
<gene>
    <name type="primary">yhjA</name>
    <name type="ordered locus">LL0783</name>
    <name type="ORF">L193031</name>
</gene>
<sequence>MALNDKLDATKDKVSGKVKETTGKVTGDEKLEAKGKTEGLMGKAKEGLENIKDKASDLAEDVAEKFNDTVDSVKHKNEK</sequence>
<proteinExistence type="inferred from homology"/>
<dbReference type="EMBL" id="AE005176">
    <property type="protein sequence ID" value="AAK04881.1"/>
    <property type="molecule type" value="Genomic_DNA"/>
</dbReference>
<dbReference type="PIR" id="G86722">
    <property type="entry name" value="G86722"/>
</dbReference>
<dbReference type="RefSeq" id="NP_266939.1">
    <property type="nucleotide sequence ID" value="NC_002662.1"/>
</dbReference>
<dbReference type="RefSeq" id="WP_003132523.1">
    <property type="nucleotide sequence ID" value="NC_002662.1"/>
</dbReference>
<dbReference type="SMR" id="Q9CHE9"/>
<dbReference type="PaxDb" id="272623-L193031"/>
<dbReference type="EnsemblBacteria" id="AAK04881">
    <property type="protein sequence ID" value="AAK04881"/>
    <property type="gene ID" value="L193031"/>
</dbReference>
<dbReference type="KEGG" id="lla:L193031"/>
<dbReference type="PATRIC" id="fig|272623.7.peg.838"/>
<dbReference type="eggNOG" id="COG3237">
    <property type="taxonomic scope" value="Bacteria"/>
</dbReference>
<dbReference type="HOGENOM" id="CLU_135567_0_2_9"/>
<dbReference type="OrthoDB" id="2243383at2"/>
<dbReference type="Proteomes" id="UP000002196">
    <property type="component" value="Chromosome"/>
</dbReference>
<dbReference type="Gene3D" id="1.10.1470.10">
    <property type="entry name" value="YjbJ"/>
    <property type="match status" value="1"/>
</dbReference>
<dbReference type="InterPro" id="IPR008462">
    <property type="entry name" value="CsbD"/>
</dbReference>
<dbReference type="InterPro" id="IPR036629">
    <property type="entry name" value="YjbJ_sf"/>
</dbReference>
<dbReference type="Pfam" id="PF05532">
    <property type="entry name" value="CsbD"/>
    <property type="match status" value="1"/>
</dbReference>
<dbReference type="SUPFAM" id="SSF69047">
    <property type="entry name" value="Hypothetical protein YjbJ"/>
    <property type="match status" value="1"/>
</dbReference>
<feature type="chain" id="PRO_0000210006" description="UPF0337 protein YhjA">
    <location>
        <begin position="1"/>
        <end position="79"/>
    </location>
</feature>
<feature type="region of interest" description="Disordered" evidence="1">
    <location>
        <begin position="1"/>
        <end position="30"/>
    </location>
</feature>
<name>YHJA_LACLA</name>
<evidence type="ECO:0000256" key="1">
    <source>
        <dbReference type="SAM" id="MobiDB-lite"/>
    </source>
</evidence>
<evidence type="ECO:0000305" key="2"/>
<accession>Q9CHE9</accession>
<keyword id="KW-1185">Reference proteome</keyword>